<keyword id="KW-0143">Chaperone</keyword>
<keyword id="KW-0963">Cytoplasm</keyword>
<keyword id="KW-1185">Reference proteome</keyword>
<comment type="function">
    <text evidence="1">Molecular chaperone capable of stabilizing a range of proteins. Seems to fulfill an ATP-independent, HSP70-like function in archaeal de novo protein folding (By similarity).</text>
</comment>
<comment type="subunit">
    <text evidence="1">Heterohexamer of two alpha and four beta subunits.</text>
</comment>
<comment type="subcellular location">
    <subcellularLocation>
        <location evidence="1">Cytoplasm</location>
    </subcellularLocation>
</comment>
<comment type="similarity">
    <text evidence="2">Belongs to the prefoldin subunit alpha family.</text>
</comment>
<comment type="sequence caution" evidence="2">
    <conflict type="erroneous initiation">
        <sequence resource="EMBL-CDS" id="CAC12204"/>
    </conflict>
</comment>
<dbReference type="EMBL" id="AL445066">
    <property type="protein sequence ID" value="CAC12204.1"/>
    <property type="status" value="ALT_INIT"/>
    <property type="molecule type" value="Genomic_DNA"/>
</dbReference>
<dbReference type="RefSeq" id="WP_010901487.1">
    <property type="nucleotide sequence ID" value="NC_002578.1"/>
</dbReference>
<dbReference type="SMR" id="Q9HJ94"/>
<dbReference type="STRING" id="273075.gene:9572297"/>
<dbReference type="PaxDb" id="273075-Ta1076m"/>
<dbReference type="EnsemblBacteria" id="CAC12204">
    <property type="protein sequence ID" value="CAC12204"/>
    <property type="gene ID" value="CAC12204"/>
</dbReference>
<dbReference type="KEGG" id="tac:Ta1076"/>
<dbReference type="eggNOG" id="arCOG01341">
    <property type="taxonomic scope" value="Archaea"/>
</dbReference>
<dbReference type="HOGENOM" id="CLU_156999_0_0_2"/>
<dbReference type="InParanoid" id="Q9HJ94"/>
<dbReference type="OrthoDB" id="56120at2157"/>
<dbReference type="Proteomes" id="UP000001024">
    <property type="component" value="Chromosome"/>
</dbReference>
<dbReference type="GO" id="GO:0005737">
    <property type="term" value="C:cytoplasm"/>
    <property type="evidence" value="ECO:0007669"/>
    <property type="project" value="UniProtKB-SubCell"/>
</dbReference>
<dbReference type="GO" id="GO:0016272">
    <property type="term" value="C:prefoldin complex"/>
    <property type="evidence" value="ECO:0007669"/>
    <property type="project" value="UniProtKB-UniRule"/>
</dbReference>
<dbReference type="GO" id="GO:0051082">
    <property type="term" value="F:unfolded protein binding"/>
    <property type="evidence" value="ECO:0007669"/>
    <property type="project" value="UniProtKB-UniRule"/>
</dbReference>
<dbReference type="GO" id="GO:0006457">
    <property type="term" value="P:protein folding"/>
    <property type="evidence" value="ECO:0007669"/>
    <property type="project" value="UniProtKB-UniRule"/>
</dbReference>
<dbReference type="Gene3D" id="1.10.287.370">
    <property type="match status" value="1"/>
</dbReference>
<dbReference type="HAMAP" id="MF_00308">
    <property type="entry name" value="PfdA"/>
    <property type="match status" value="1"/>
</dbReference>
<dbReference type="InterPro" id="IPR011599">
    <property type="entry name" value="PFD_alpha_archaea"/>
</dbReference>
<dbReference type="InterPro" id="IPR009053">
    <property type="entry name" value="Prefoldin"/>
</dbReference>
<dbReference type="InterPro" id="IPR004127">
    <property type="entry name" value="Prefoldin_subunit_alpha"/>
</dbReference>
<dbReference type="NCBIfam" id="TIGR00293">
    <property type="entry name" value="prefoldin subunit alpha"/>
    <property type="match status" value="1"/>
</dbReference>
<dbReference type="Pfam" id="PF02996">
    <property type="entry name" value="Prefoldin"/>
    <property type="match status" value="1"/>
</dbReference>
<dbReference type="SUPFAM" id="SSF46579">
    <property type="entry name" value="Prefoldin"/>
    <property type="match status" value="1"/>
</dbReference>
<reference key="1">
    <citation type="journal article" date="2000" name="Nature">
        <title>The genome sequence of the thermoacidophilic scavenger Thermoplasma acidophilum.</title>
        <authorList>
            <person name="Ruepp A."/>
            <person name="Graml W."/>
            <person name="Santos-Martinez M.-L."/>
            <person name="Koretke K.K."/>
            <person name="Volker C."/>
            <person name="Mewes H.-W."/>
            <person name="Frishman D."/>
            <person name="Stocker S."/>
            <person name="Lupas A.N."/>
            <person name="Baumeister W."/>
        </authorList>
    </citation>
    <scope>NUCLEOTIDE SEQUENCE [LARGE SCALE GENOMIC DNA]</scope>
    <source>
        <strain>ATCC 25905 / DSM 1728 / JCM 9062 / NBRC 15155 / AMRC-C165</strain>
    </source>
</reference>
<evidence type="ECO:0000250" key="1"/>
<evidence type="ECO:0000305" key="2"/>
<gene>
    <name type="primary">pfdA</name>
    <name type="ordered locus">Ta1076</name>
</gene>
<protein>
    <recommendedName>
        <fullName>Prefoldin subunit alpha</fullName>
    </recommendedName>
    <alternativeName>
        <fullName>GimC subunit alpha</fullName>
    </alternativeName>
</protein>
<feature type="chain" id="PRO_0000153690" description="Prefoldin subunit alpha">
    <location>
        <begin position="1"/>
        <end position="130"/>
    </location>
</feature>
<name>PFDA_THEAC</name>
<accession>Q9HJ94</accession>
<proteinExistence type="inferred from homology"/>
<sequence>MARDVEAQLNYIESLISSVDSQIDTLNKAMIEVQSTIDLLSNGDLASSPEKLISIGSGLFAKGNITIDEDLIVPIGSGIYVAETKERSVERLKKNLEDIKASIQKLLDQRKTLVDQYNTVYATEATRNVK</sequence>
<organism>
    <name type="scientific">Thermoplasma acidophilum (strain ATCC 25905 / DSM 1728 / JCM 9062 / NBRC 15155 / AMRC-C165)</name>
    <dbReference type="NCBI Taxonomy" id="273075"/>
    <lineage>
        <taxon>Archaea</taxon>
        <taxon>Methanobacteriati</taxon>
        <taxon>Thermoplasmatota</taxon>
        <taxon>Thermoplasmata</taxon>
        <taxon>Thermoplasmatales</taxon>
        <taxon>Thermoplasmataceae</taxon>
        <taxon>Thermoplasma</taxon>
    </lineage>
</organism>